<reference key="1">
    <citation type="journal article" date="2009" name="Proc. Natl. Acad. Sci. U.S.A.">
        <title>The genomic basis of trophic strategy in marine bacteria.</title>
        <authorList>
            <person name="Lauro F.M."/>
            <person name="McDougald D."/>
            <person name="Thomas T."/>
            <person name="Williams T.J."/>
            <person name="Egan S."/>
            <person name="Rice S."/>
            <person name="DeMaere M.Z."/>
            <person name="Ting L."/>
            <person name="Ertan H."/>
            <person name="Johnson J."/>
            <person name="Ferriera S."/>
            <person name="Lapidus A."/>
            <person name="Anderson I."/>
            <person name="Kyrpides N."/>
            <person name="Munk A.C."/>
            <person name="Detter C."/>
            <person name="Han C.S."/>
            <person name="Brown M.V."/>
            <person name="Robb F.T."/>
            <person name="Kjelleberg S."/>
            <person name="Cavicchioli R."/>
        </authorList>
    </citation>
    <scope>NUCLEOTIDE SEQUENCE [LARGE SCALE GENOMIC DNA]</scope>
    <source>
        <strain>DSM 13593 / LMG 18877 / RB2256</strain>
    </source>
</reference>
<comment type="function">
    <text evidence="1">DNA-dependent RNA polymerase catalyzes the transcription of DNA into RNA using the four ribonucleoside triphosphates as substrates.</text>
</comment>
<comment type="catalytic activity">
    <reaction evidence="1">
        <text>RNA(n) + a ribonucleoside 5'-triphosphate = RNA(n+1) + diphosphate</text>
        <dbReference type="Rhea" id="RHEA:21248"/>
        <dbReference type="Rhea" id="RHEA-COMP:14527"/>
        <dbReference type="Rhea" id="RHEA-COMP:17342"/>
        <dbReference type="ChEBI" id="CHEBI:33019"/>
        <dbReference type="ChEBI" id="CHEBI:61557"/>
        <dbReference type="ChEBI" id="CHEBI:140395"/>
        <dbReference type="EC" id="2.7.7.6"/>
    </reaction>
</comment>
<comment type="subunit">
    <text evidence="1">The RNAP catalytic core consists of 2 alpha, 1 beta, 1 beta' and 1 omega subunit. When a sigma factor is associated with the core the holoenzyme is formed, which can initiate transcription.</text>
</comment>
<comment type="similarity">
    <text evidence="1">Belongs to the RNA polymerase beta chain family.</text>
</comment>
<dbReference type="EC" id="2.7.7.6" evidence="1"/>
<dbReference type="EMBL" id="CP000356">
    <property type="protein sequence ID" value="ABF53199.1"/>
    <property type="molecule type" value="Genomic_DNA"/>
</dbReference>
<dbReference type="RefSeq" id="WP_011541779.1">
    <property type="nucleotide sequence ID" value="NC_008048.1"/>
</dbReference>
<dbReference type="SMR" id="Q1GT23"/>
<dbReference type="STRING" id="317655.Sala_1486"/>
<dbReference type="KEGG" id="sal:Sala_1486"/>
<dbReference type="eggNOG" id="COG0085">
    <property type="taxonomic scope" value="Bacteria"/>
</dbReference>
<dbReference type="HOGENOM" id="CLU_000524_4_0_5"/>
<dbReference type="OrthoDB" id="9803954at2"/>
<dbReference type="Proteomes" id="UP000006578">
    <property type="component" value="Chromosome"/>
</dbReference>
<dbReference type="GO" id="GO:0000428">
    <property type="term" value="C:DNA-directed RNA polymerase complex"/>
    <property type="evidence" value="ECO:0007669"/>
    <property type="project" value="UniProtKB-KW"/>
</dbReference>
<dbReference type="GO" id="GO:0003677">
    <property type="term" value="F:DNA binding"/>
    <property type="evidence" value="ECO:0007669"/>
    <property type="project" value="UniProtKB-UniRule"/>
</dbReference>
<dbReference type="GO" id="GO:0003899">
    <property type="term" value="F:DNA-directed RNA polymerase activity"/>
    <property type="evidence" value="ECO:0007669"/>
    <property type="project" value="UniProtKB-UniRule"/>
</dbReference>
<dbReference type="GO" id="GO:0032549">
    <property type="term" value="F:ribonucleoside binding"/>
    <property type="evidence" value="ECO:0007669"/>
    <property type="project" value="InterPro"/>
</dbReference>
<dbReference type="GO" id="GO:0006351">
    <property type="term" value="P:DNA-templated transcription"/>
    <property type="evidence" value="ECO:0007669"/>
    <property type="project" value="UniProtKB-UniRule"/>
</dbReference>
<dbReference type="CDD" id="cd00653">
    <property type="entry name" value="RNA_pol_B_RPB2"/>
    <property type="match status" value="1"/>
</dbReference>
<dbReference type="FunFam" id="2.40.50.100:FF:000006">
    <property type="entry name" value="DNA-directed RNA polymerase subunit beta"/>
    <property type="match status" value="1"/>
</dbReference>
<dbReference type="FunFam" id="3.90.1800.10:FF:000001">
    <property type="entry name" value="DNA-directed RNA polymerase subunit beta"/>
    <property type="match status" value="1"/>
</dbReference>
<dbReference type="Gene3D" id="2.40.50.100">
    <property type="match status" value="1"/>
</dbReference>
<dbReference type="Gene3D" id="2.40.50.150">
    <property type="match status" value="1"/>
</dbReference>
<dbReference type="Gene3D" id="3.90.1100.10">
    <property type="match status" value="2"/>
</dbReference>
<dbReference type="Gene3D" id="2.30.150.10">
    <property type="entry name" value="DNA-directed RNA polymerase, beta subunit, external 1 domain"/>
    <property type="match status" value="1"/>
</dbReference>
<dbReference type="Gene3D" id="2.40.270.10">
    <property type="entry name" value="DNA-directed RNA polymerase, subunit 2, domain 6"/>
    <property type="match status" value="1"/>
</dbReference>
<dbReference type="Gene3D" id="3.90.1800.10">
    <property type="entry name" value="RNA polymerase alpha subunit dimerisation domain"/>
    <property type="match status" value="1"/>
</dbReference>
<dbReference type="Gene3D" id="3.90.1110.10">
    <property type="entry name" value="RNA polymerase Rpb2, domain 2"/>
    <property type="match status" value="1"/>
</dbReference>
<dbReference type="HAMAP" id="MF_01321">
    <property type="entry name" value="RNApol_bact_RpoB"/>
    <property type="match status" value="1"/>
</dbReference>
<dbReference type="InterPro" id="IPR042107">
    <property type="entry name" value="DNA-dir_RNA_pol_bsu_ext_1_sf"/>
</dbReference>
<dbReference type="InterPro" id="IPR019462">
    <property type="entry name" value="DNA-dir_RNA_pol_bsu_external_1"/>
</dbReference>
<dbReference type="InterPro" id="IPR015712">
    <property type="entry name" value="DNA-dir_RNA_pol_su2"/>
</dbReference>
<dbReference type="InterPro" id="IPR007120">
    <property type="entry name" value="DNA-dir_RNAP_su2_dom"/>
</dbReference>
<dbReference type="InterPro" id="IPR037033">
    <property type="entry name" value="DNA-dir_RNAP_su2_hyb_sf"/>
</dbReference>
<dbReference type="InterPro" id="IPR010243">
    <property type="entry name" value="RNA_pol_bsu_bac"/>
</dbReference>
<dbReference type="InterPro" id="IPR007121">
    <property type="entry name" value="RNA_pol_bsu_CS"/>
</dbReference>
<dbReference type="InterPro" id="IPR007644">
    <property type="entry name" value="RNA_pol_bsu_protrusion"/>
</dbReference>
<dbReference type="InterPro" id="IPR007642">
    <property type="entry name" value="RNA_pol_Rpb2_2"/>
</dbReference>
<dbReference type="InterPro" id="IPR037034">
    <property type="entry name" value="RNA_pol_Rpb2_2_sf"/>
</dbReference>
<dbReference type="InterPro" id="IPR007645">
    <property type="entry name" value="RNA_pol_Rpb2_3"/>
</dbReference>
<dbReference type="InterPro" id="IPR007641">
    <property type="entry name" value="RNA_pol_Rpb2_7"/>
</dbReference>
<dbReference type="InterPro" id="IPR014724">
    <property type="entry name" value="RNA_pol_RPB2_OB-fold"/>
</dbReference>
<dbReference type="NCBIfam" id="NF001616">
    <property type="entry name" value="PRK00405.1"/>
    <property type="match status" value="1"/>
</dbReference>
<dbReference type="NCBIfam" id="TIGR02013">
    <property type="entry name" value="rpoB"/>
    <property type="match status" value="1"/>
</dbReference>
<dbReference type="PANTHER" id="PTHR20856">
    <property type="entry name" value="DNA-DIRECTED RNA POLYMERASE I SUBUNIT 2"/>
    <property type="match status" value="1"/>
</dbReference>
<dbReference type="Pfam" id="PF04563">
    <property type="entry name" value="RNA_pol_Rpb2_1"/>
    <property type="match status" value="1"/>
</dbReference>
<dbReference type="Pfam" id="PF04561">
    <property type="entry name" value="RNA_pol_Rpb2_2"/>
    <property type="match status" value="2"/>
</dbReference>
<dbReference type="Pfam" id="PF04565">
    <property type="entry name" value="RNA_pol_Rpb2_3"/>
    <property type="match status" value="1"/>
</dbReference>
<dbReference type="Pfam" id="PF10385">
    <property type="entry name" value="RNA_pol_Rpb2_45"/>
    <property type="match status" value="1"/>
</dbReference>
<dbReference type="Pfam" id="PF00562">
    <property type="entry name" value="RNA_pol_Rpb2_6"/>
    <property type="match status" value="1"/>
</dbReference>
<dbReference type="Pfam" id="PF04560">
    <property type="entry name" value="RNA_pol_Rpb2_7"/>
    <property type="match status" value="1"/>
</dbReference>
<dbReference type="SUPFAM" id="SSF64484">
    <property type="entry name" value="beta and beta-prime subunits of DNA dependent RNA-polymerase"/>
    <property type="match status" value="1"/>
</dbReference>
<dbReference type="PROSITE" id="PS01166">
    <property type="entry name" value="RNA_POL_BETA"/>
    <property type="match status" value="1"/>
</dbReference>
<name>RPOB_SPHAL</name>
<feature type="chain" id="PRO_0000300407" description="DNA-directed RNA polymerase subunit beta">
    <location>
        <begin position="1"/>
        <end position="1392"/>
    </location>
</feature>
<feature type="region of interest" description="Disordered" evidence="2">
    <location>
        <begin position="1372"/>
        <end position="1392"/>
    </location>
</feature>
<proteinExistence type="inferred from homology"/>
<protein>
    <recommendedName>
        <fullName evidence="1">DNA-directed RNA polymerase subunit beta</fullName>
        <shortName evidence="1">RNAP subunit beta</shortName>
        <ecNumber evidence="1">2.7.7.6</ecNumber>
    </recommendedName>
    <alternativeName>
        <fullName evidence="1">RNA polymerase subunit beta</fullName>
    </alternativeName>
    <alternativeName>
        <fullName evidence="1">Transcriptase subunit beta</fullName>
    </alternativeName>
</protein>
<organism>
    <name type="scientific">Sphingopyxis alaskensis (strain DSM 13593 / LMG 18877 / RB2256)</name>
    <name type="common">Sphingomonas alaskensis</name>
    <dbReference type="NCBI Taxonomy" id="317655"/>
    <lineage>
        <taxon>Bacteria</taxon>
        <taxon>Pseudomonadati</taxon>
        <taxon>Pseudomonadota</taxon>
        <taxon>Alphaproteobacteria</taxon>
        <taxon>Sphingomonadales</taxon>
        <taxon>Sphingomonadaceae</taxon>
        <taxon>Sphingopyxis</taxon>
    </lineage>
</organism>
<gene>
    <name evidence="1" type="primary">rpoB</name>
    <name type="ordered locus">Sala_1486</name>
</gene>
<keyword id="KW-0240">DNA-directed RNA polymerase</keyword>
<keyword id="KW-0548">Nucleotidyltransferase</keyword>
<keyword id="KW-1185">Reference proteome</keyword>
<keyword id="KW-0804">Transcription</keyword>
<keyword id="KW-0808">Transferase</keyword>
<evidence type="ECO:0000255" key="1">
    <source>
        <dbReference type="HAMAP-Rule" id="MF_01321"/>
    </source>
</evidence>
<evidence type="ECO:0000256" key="2">
    <source>
        <dbReference type="SAM" id="MobiDB-lite"/>
    </source>
</evidence>
<sequence>MATKAKSVGQALEATATKRIRKLFGNIHEAVEMPNLIEVQRESYEQFLRSDPSIGYVSGLEKTLRSVFPIRDFAGTAELDFVHYELEAPKYDVEECRQRGITYAAPMKVTLRLIVFEVDSETDTRSVLDIKEQDVYMGDMPLMTENGTFFVNGTERVIVSQMHRSPGVLFDHDRGKTHSSGKFLFAARVIPYRGSWLDFEFDAKDIVNVRIDRKRKLPVTSLLYALGMTGEEILNHFYDRLVFERAENGWKVPFMVENWRGSKPAFDVVDAKTGEVVFAAGHKISPRLANKAAKDGLDTLLIPTEEIFGRYSAYDLINESTGEIYIEAGDEVSAENLEKLDAAGIDKLVLLDIDHNNTGPWIRNTLKADKAEDRDQALSDIYRVMRPGEPPTRETAEALFAGLFFDPERYDLSAVGRVKLNMRLGLDAEDTVTTLRSEDILAVVKELVNLKDGKGEIDDIDNLGNRRVRSVGELLENQYRVGLLRMERAVKERMSSVDVSTVMPNDLINAKPAVAAVREFFGSSQLSQFMDQTNPLSEVTHKRRVSALGPGGLTRERAGFEVRDVHPTHYGRICPIETPEGPNIGLINSLATFARVNKYGFIETPYRRVVDGKVTNEVVYLSAMEESKHTVAQANADLNPDGSFIDELISAREAGEFLMAPREQITLMDVSPKQLVSVAASLIPFLENDDANRALMGSNMQRQAVPLLRAEAPVVGTGMEETVARDSGAAIAARRGGVIDQVDATRIVIRATDMVEPGKSGVDIYRLQKFQRSNQNTCINQRPLVKVGDVVRAGDIIADGPSTELGELALGKNVLVAFMPWNGYNYEDSILISERIVKDDVFTSIHIEEFEVTARDTRLGPEDITRDIPNVGEEALRNLDEAGIVYIGAEVGPGDILAGKITPKGESPMTPEEKLLRAIFGEKASDVRDTSLRLPPGVSGTVVEVRVFNRHGIDKDERAIAIEREEIERLKQDADDERAILNRATFSSLKDLLVGQATSAVPKGLKKGDIVTEEMLVGLDRADWWKLAVVDDKAQTALEAIKAQYDDAIKRINAKYEDRVEKLQRGDELAPGVLKMVKVFVAVKRKLQPGDKMAGRHGNKGVISRILPVEDMPFLEDGTPVDIVLNPLGVPSRMNVGQILETHLGWASRGLGQQVTRALEEWRDANPDATGGEMPEAVREKLEHVYGAEYVEDIRSRDAEGIIELASNLKVGVPFATPVFDGAKEADVSNMLTLAGLDESGQSDLYDGRTGDKFDRKVTVGYIYMLKLHHLVDDKIHARSIGPYSLVTQQPLGGKAQFGGQRFGEMEVWALQAYGAAYTLQEMLTVKSDDVIGRTKVYEAIVKGDDTFEAGIPESFNVLVKEMRSLGLNVELSSYAEEDPDEGPEALPEAAE</sequence>
<accession>Q1GT23</accession>